<sequence>MRPPADPGARRRATHGRGLSAEGLALLVLMLKGYRPLARRFAAAGGEIDLIVRRGRTIAFVEVKARATLDAAATAIDARKRARVSRAARAWLARHPLAAGATLRADAVFVAPRRWPRHLPNAFEIEGL</sequence>
<comment type="similarity">
    <text evidence="1">Belongs to the UPF0102 family.</text>
</comment>
<reference key="1">
    <citation type="submission" date="2007-12" db="EMBL/GenBank/DDBJ databases">
        <title>Complete sequence of Methylobacterium extorquens PA1.</title>
        <authorList>
            <consortium name="US DOE Joint Genome Institute"/>
            <person name="Copeland A."/>
            <person name="Lucas S."/>
            <person name="Lapidus A."/>
            <person name="Barry K."/>
            <person name="Glavina del Rio T."/>
            <person name="Dalin E."/>
            <person name="Tice H."/>
            <person name="Pitluck S."/>
            <person name="Saunders E."/>
            <person name="Brettin T."/>
            <person name="Bruce D."/>
            <person name="Detter J.C."/>
            <person name="Han C."/>
            <person name="Schmutz J."/>
            <person name="Larimer F."/>
            <person name="Land M."/>
            <person name="Hauser L."/>
            <person name="Kyrpides N."/>
            <person name="Kim E."/>
            <person name="Marx C."/>
            <person name="Richardson P."/>
        </authorList>
    </citation>
    <scope>NUCLEOTIDE SEQUENCE [LARGE SCALE GENOMIC DNA]</scope>
    <source>
        <strain>PA1</strain>
    </source>
</reference>
<feature type="chain" id="PRO_1000200149" description="UPF0102 protein Mext_0406">
    <location>
        <begin position="1"/>
        <end position="128"/>
    </location>
</feature>
<organism>
    <name type="scientific">Methylorubrum extorquens (strain PA1)</name>
    <name type="common">Methylobacterium extorquens</name>
    <dbReference type="NCBI Taxonomy" id="419610"/>
    <lineage>
        <taxon>Bacteria</taxon>
        <taxon>Pseudomonadati</taxon>
        <taxon>Pseudomonadota</taxon>
        <taxon>Alphaproteobacteria</taxon>
        <taxon>Hyphomicrobiales</taxon>
        <taxon>Methylobacteriaceae</taxon>
        <taxon>Methylorubrum</taxon>
    </lineage>
</organism>
<dbReference type="EMBL" id="CP000908">
    <property type="protein sequence ID" value="ABY28828.1"/>
    <property type="molecule type" value="Genomic_DNA"/>
</dbReference>
<dbReference type="RefSeq" id="WP_012252200.1">
    <property type="nucleotide sequence ID" value="NC_010172.1"/>
</dbReference>
<dbReference type="SMR" id="A9VZS2"/>
<dbReference type="GeneID" id="72987798"/>
<dbReference type="KEGG" id="mex:Mext_0406"/>
<dbReference type="eggNOG" id="COG0792">
    <property type="taxonomic scope" value="Bacteria"/>
</dbReference>
<dbReference type="HOGENOM" id="CLU_115353_0_2_5"/>
<dbReference type="BioCyc" id="MEXT419610:MEXT_RS02015-MONOMER"/>
<dbReference type="GO" id="GO:0003676">
    <property type="term" value="F:nucleic acid binding"/>
    <property type="evidence" value="ECO:0007669"/>
    <property type="project" value="InterPro"/>
</dbReference>
<dbReference type="Gene3D" id="3.40.1350.10">
    <property type="match status" value="1"/>
</dbReference>
<dbReference type="HAMAP" id="MF_00048">
    <property type="entry name" value="UPF0102"/>
    <property type="match status" value="1"/>
</dbReference>
<dbReference type="InterPro" id="IPR011335">
    <property type="entry name" value="Restrct_endonuc-II-like"/>
</dbReference>
<dbReference type="InterPro" id="IPR011856">
    <property type="entry name" value="tRNA_endonuc-like_dom_sf"/>
</dbReference>
<dbReference type="InterPro" id="IPR003509">
    <property type="entry name" value="UPF0102_YraN-like"/>
</dbReference>
<dbReference type="NCBIfam" id="NF009151">
    <property type="entry name" value="PRK12497.1-5"/>
    <property type="match status" value="1"/>
</dbReference>
<dbReference type="NCBIfam" id="NF011272">
    <property type="entry name" value="PRK14679.1"/>
    <property type="match status" value="1"/>
</dbReference>
<dbReference type="PANTHER" id="PTHR34039">
    <property type="entry name" value="UPF0102 PROTEIN YRAN"/>
    <property type="match status" value="1"/>
</dbReference>
<dbReference type="PANTHER" id="PTHR34039:SF1">
    <property type="entry name" value="UPF0102 PROTEIN YRAN"/>
    <property type="match status" value="1"/>
</dbReference>
<dbReference type="Pfam" id="PF02021">
    <property type="entry name" value="UPF0102"/>
    <property type="match status" value="1"/>
</dbReference>
<dbReference type="SUPFAM" id="SSF52980">
    <property type="entry name" value="Restriction endonuclease-like"/>
    <property type="match status" value="1"/>
</dbReference>
<name>Y406_METEP</name>
<evidence type="ECO:0000255" key="1">
    <source>
        <dbReference type="HAMAP-Rule" id="MF_00048"/>
    </source>
</evidence>
<proteinExistence type="inferred from homology"/>
<gene>
    <name type="ordered locus">Mext_0406</name>
</gene>
<protein>
    <recommendedName>
        <fullName evidence="1">UPF0102 protein Mext_0406</fullName>
    </recommendedName>
</protein>
<accession>A9VZS2</accession>